<proteinExistence type="evidence at protein level"/>
<comment type="function">
    <text evidence="4 10 11 12 13">Heterochromatin component that specifically recognizes and binds methylated 'Lys-9' of histone H3 (H3K9me) and promotes recruitment of proteins that mediate epigenetic repression (PubMed:20871592, PubMed:26022416). Mediates recruitment of the HUSH complex to H3K9me3 sites: the HUSH complex is recruited to genomic loci rich in H3K9me3 and is required to maintain transcriptional silencing by promoting recruitment of SETDB1, a histone methyltransferase that mediates further deposition of H3K9me3, as well as MORC2 (PubMed:26022416, PubMed:28581500). Binds H3K9me and promotes DNA methylation by recruiting DNMT3A to target CpG sites; these can be situated within the coding region of the gene (PubMed:20871592). Mediates down-regulation of CDH1 expression (PubMed:20871592). Also represses L1 retrotransposons in collaboration with MORC2 and, probably, SETDB1, the silencing is dependent of repressive epigenetic modifications, such as H3K9me3 mark. Silencing events often occur within introns of transcriptionally active genes, and lead to the down-regulation of host gene expression (PubMed:29211708). The HUSH complex is also involved in the silencing of unintegrated retroviral DNA by being recruited by ZNF638: some part of the retroviral DNA formed immediately after infection remains unintegrated in the host genome and is transcriptionally repressed (PubMed:30487602).</text>
</comment>
<comment type="subunit">
    <text evidence="1 4 5 6 7 9 10 11 13">Homodimer (PubMed:21419134, PubMed:22022377, PubMed:22086334). Interacts (via chromo domain) with histone H3K9me3 (PubMed:20871592). Has the highest affinity for H3K9me3, and lesser affinity for H3K9me2 and H3K9me1 (PubMed:20871592). Component of the HUSH complex; at least composed of TASOR, PPHLN1 and MPHOSPH8 (PubMed:26022416). Interacts with DNMT3, EHMT1 and SETDB1 (PubMed:20871592, PubMed:22086334). Interacts with MORC2; the interaction associateS MORC2 with the HUSH complex which recruits MORC2 to heterochromatic loci (PubMed:28581500). Interacts with ZNF638; leading to recruitment of the HUSH complex to unintegrated retroviral DNA (PubMed:30487602). Interacts with TASOR (By similarity). Interacts with humanin (PubMed:23532874).</text>
</comment>
<comment type="interaction">
    <interactant intactId="EBI-2653928">
        <id>Q99549</id>
    </interactant>
    <interactant intactId="EBI-766087">
        <id>Q9H9B1</id>
        <label>EHMT1</label>
    </interactant>
    <organismsDiffer>false</organismsDiffer>
    <experiments>3</experiments>
</comment>
<comment type="interaction">
    <interactant intactId="EBI-2653928">
        <id>Q99549</id>
    </interactant>
    <interactant intactId="EBI-79722">
        <id>P68431</id>
        <label>H3C12</label>
    </interactant>
    <organismsDiffer>false</organismsDiffer>
    <experiments>5</experiments>
</comment>
<comment type="interaction">
    <interactant intactId="EBI-2653928">
        <id>Q99549</id>
    </interactant>
    <interactant intactId="EBI-79691">
        <id>Q15047</id>
        <label>SETDB1</label>
    </interactant>
    <organismsDiffer>false</organismsDiffer>
    <experiments>3</experiments>
</comment>
<comment type="interaction">
    <interactant intactId="EBI-2653928">
        <id>Q99549</id>
    </interactant>
    <interactant intactId="EBI-308354">
        <id>Q9UK61</id>
        <label>TASOR</label>
    </interactant>
    <organismsDiffer>false</organismsDiffer>
    <experiments>3</experiments>
</comment>
<comment type="subcellular location">
    <subcellularLocation>
        <location evidence="4 8 10 11 14">Nucleus</location>
    </subcellularLocation>
    <subcellularLocation>
        <location evidence="8 10 11">Chromosome</location>
    </subcellularLocation>
    <text evidence="4 8 10">Detected on heterochromatin (PubMed:20871592, PubMed:26022416). Dissociates from chromatin during interphase and early mitosis (PubMed:23416073). Detected on nucleosomes (PubMed:20871592).</text>
</comment>
<comment type="alternative products">
    <event type="alternative splicing"/>
    <isoform>
        <id>Q99549-1</id>
        <name>1</name>
        <sequence type="displayed"/>
    </isoform>
    <isoform>
        <id>Q99549-2</id>
        <name>2</name>
        <sequence type="described" ref="VSP_031523"/>
    </isoform>
</comment>
<comment type="domain">
    <text evidence="5 6">The chromo domain mediates interaction with methylated 'Lys-9' of histone H3 (H3K9me), with the highest affinity for the trimethylated form (H3K9me3).</text>
</comment>
<comment type="PTM">
    <text evidence="8 14">Phosphorylated in M (mitotic) phase. Phosphorylation by CDK1 promotes dissociation from chromatin.</text>
</comment>
<comment type="sequence caution" evidence="18">
    <conflict type="erroneous initiation">
        <sequence resource="EMBL-CDS" id="AAH46214"/>
    </conflict>
    <text>Truncated N-terminus.</text>
</comment>
<comment type="sequence caution" evidence="18">
    <conflict type="erroneous initiation">
        <sequence resource="EMBL-CDS" id="BAB71284"/>
    </conflict>
    <text>Truncated N-terminus.</text>
</comment>
<comment type="sequence caution" evidence="18">
    <conflict type="frameshift">
        <sequence resource="EMBL-CDS" id="CAI46172"/>
    </conflict>
</comment>
<keyword id="KW-0002">3D-structure</keyword>
<keyword id="KW-0007">Acetylation</keyword>
<keyword id="KW-0025">Alternative splicing</keyword>
<keyword id="KW-0040">ANK repeat</keyword>
<keyword id="KW-0158">Chromosome</keyword>
<keyword id="KW-0539">Nucleus</keyword>
<keyword id="KW-0597">Phosphoprotein</keyword>
<keyword id="KW-1267">Proteomics identification</keyword>
<keyword id="KW-1185">Reference proteome</keyword>
<keyword id="KW-0677">Repeat</keyword>
<keyword id="KW-0678">Repressor</keyword>
<keyword id="KW-0804">Transcription</keyword>
<keyword id="KW-0805">Transcription regulation</keyword>
<organism>
    <name type="scientific">Homo sapiens</name>
    <name type="common">Human</name>
    <dbReference type="NCBI Taxonomy" id="9606"/>
    <lineage>
        <taxon>Eukaryota</taxon>
        <taxon>Metazoa</taxon>
        <taxon>Chordata</taxon>
        <taxon>Craniata</taxon>
        <taxon>Vertebrata</taxon>
        <taxon>Euteleostomi</taxon>
        <taxon>Mammalia</taxon>
        <taxon>Eutheria</taxon>
        <taxon>Euarchontoglires</taxon>
        <taxon>Primates</taxon>
        <taxon>Haplorrhini</taxon>
        <taxon>Catarrhini</taxon>
        <taxon>Hominidae</taxon>
        <taxon>Homo</taxon>
    </lineage>
</organism>
<name>MPP8_HUMAN</name>
<sequence>MEQVAEGARVTAVPVSAADSTEELAEVEEGVGVVGEDNDAAARGAEAFGDSEEDGEDVFEVEKILDMKTEGGKVLYKVRWKGYTSDDDTWEPEIHLEDCKEVLLEFRKKIAENKAKAVRKDIQRLSLNNDIFEANSDSDQQSETKEDTSPKKKKKKLRQREEKSPDDLKKKKAKAGKLKDKSKPDLESSLESLVFDLRTKKRISEAKEELKESKKPKKDEVKETKELKKVKKGEIRDLKTKTREDPKENRKTKKEKFVESQVESESSVLNDSPFPEDDSEGLHSDSREEKQNTKSARERAGQDMGLEHGFEKPLDSAMSAEEDTDVRGRRKKKTPRKAEDTRENRKLENKNAFLEKKTVPKKQRNQDRSKSAAELEKLMPVSAQTPKGRRLSGEERGLWSTDSAEEDKETKRNESKEKYQKRHDSDKEEKGRKEPKGLKTLKEIRNAFDLFKLTPEEKNDVSENNRKREEIPLDFKTIDDHKTKENKQSLKERRNTRDETDTWAYIAAEGDQEVLDSVCQADENSDGRQQILSLGMDLQLEWMKLEDFQKHLDGKDENFAATDAIPSNVLRDAVKNGDYITVKVALNSNEEYNLDQEDSSGMTLVMLAAAGGQDDLLRLLITKGAKVNGRQKNGTTALIHAAEKNFLTTVAILLEAGAFVNVQQSNGETALMKACKRGNSDIVRLVIECGADCNILSKHQNSALHFAKQSNNVLVYDLLKNHLETLSRVAEETIKDYFEARLALLEPVFPIACHRLCEGPDFSTDFNYKPPQNIPEGSGILLFIFHANFLGKEVIARLCGPCSVQAVVLNDKFQLPVFLDSHFVYSFSPVAGPNKLFIRLTEAPSAKVKLLIGAYRVQLQ</sequence>
<evidence type="ECO:0000250" key="1">
    <source>
        <dbReference type="UniProtKB" id="Q3TYA6"/>
    </source>
</evidence>
<evidence type="ECO:0000255" key="2">
    <source>
        <dbReference type="PROSITE-ProRule" id="PRU00053"/>
    </source>
</evidence>
<evidence type="ECO:0000256" key="3">
    <source>
        <dbReference type="SAM" id="MobiDB-lite"/>
    </source>
</evidence>
<evidence type="ECO:0000269" key="4">
    <source>
    </source>
</evidence>
<evidence type="ECO:0000269" key="5">
    <source>
    </source>
</evidence>
<evidence type="ECO:0000269" key="6">
    <source>
    </source>
</evidence>
<evidence type="ECO:0000269" key="7">
    <source>
    </source>
</evidence>
<evidence type="ECO:0000269" key="8">
    <source>
    </source>
</evidence>
<evidence type="ECO:0000269" key="9">
    <source>
    </source>
</evidence>
<evidence type="ECO:0000269" key="10">
    <source>
    </source>
</evidence>
<evidence type="ECO:0000269" key="11">
    <source>
    </source>
</evidence>
<evidence type="ECO:0000269" key="12">
    <source>
    </source>
</evidence>
<evidence type="ECO:0000269" key="13">
    <source>
    </source>
</evidence>
<evidence type="ECO:0000269" key="14">
    <source>
    </source>
</evidence>
<evidence type="ECO:0000303" key="15">
    <source>
    </source>
</evidence>
<evidence type="ECO:0000303" key="16">
    <source>
    </source>
</evidence>
<evidence type="ECO:0000303" key="17">
    <source>
    </source>
</evidence>
<evidence type="ECO:0000305" key="18"/>
<evidence type="ECO:0000305" key="19">
    <source>
    </source>
</evidence>
<evidence type="ECO:0000312" key="20">
    <source>
        <dbReference type="HGNC" id="HGNC:29810"/>
    </source>
</evidence>
<evidence type="ECO:0007744" key="21">
    <source>
    </source>
</evidence>
<evidence type="ECO:0007744" key="22">
    <source>
    </source>
</evidence>
<evidence type="ECO:0007744" key="23">
    <source>
    </source>
</evidence>
<evidence type="ECO:0007744" key="24">
    <source>
    </source>
</evidence>
<evidence type="ECO:0007744" key="25">
    <source>
    </source>
</evidence>
<evidence type="ECO:0007744" key="26">
    <source>
    </source>
</evidence>
<evidence type="ECO:0007744" key="27">
    <source>
    </source>
</evidence>
<evidence type="ECO:0007744" key="28">
    <source>
    </source>
</evidence>
<evidence type="ECO:0007744" key="29">
    <source>
    </source>
</evidence>
<evidence type="ECO:0007744" key="30">
    <source>
    </source>
</evidence>
<evidence type="ECO:0007829" key="31">
    <source>
        <dbReference type="PDB" id="6V2S"/>
    </source>
</evidence>
<evidence type="ECO:0007829" key="32">
    <source>
        <dbReference type="PDB" id="8QFB"/>
    </source>
</evidence>
<dbReference type="EMBL" id="AK056785">
    <property type="protein sequence ID" value="BAB71284.1"/>
    <property type="status" value="ALT_INIT"/>
    <property type="molecule type" value="mRNA"/>
</dbReference>
<dbReference type="EMBL" id="AK300258">
    <property type="protein sequence ID" value="BAH13245.1"/>
    <property type="molecule type" value="mRNA"/>
</dbReference>
<dbReference type="EMBL" id="AL832864">
    <property type="protein sequence ID" value="CAI46172.1"/>
    <property type="status" value="ALT_FRAME"/>
    <property type="molecule type" value="mRNA"/>
</dbReference>
<dbReference type="EMBL" id="AL354808">
    <property type="status" value="NOT_ANNOTATED_CDS"/>
    <property type="molecule type" value="Genomic_DNA"/>
</dbReference>
<dbReference type="EMBL" id="AL359457">
    <property type="status" value="NOT_ANNOTATED_CDS"/>
    <property type="molecule type" value="Genomic_DNA"/>
</dbReference>
<dbReference type="EMBL" id="CH471075">
    <property type="protein sequence ID" value="EAX08228.1"/>
    <property type="molecule type" value="Genomic_DNA"/>
</dbReference>
<dbReference type="EMBL" id="CH471075">
    <property type="protein sequence ID" value="EAX08230.1"/>
    <property type="molecule type" value="Genomic_DNA"/>
</dbReference>
<dbReference type="EMBL" id="BC003542">
    <property type="protein sequence ID" value="AAH03542.2"/>
    <property type="molecule type" value="mRNA"/>
</dbReference>
<dbReference type="EMBL" id="BC046214">
    <property type="protein sequence ID" value="AAH46214.1"/>
    <property type="status" value="ALT_INIT"/>
    <property type="molecule type" value="mRNA"/>
</dbReference>
<dbReference type="EMBL" id="X98259">
    <property type="protein sequence ID" value="CAA66912.1"/>
    <property type="molecule type" value="mRNA"/>
</dbReference>
<dbReference type="CCDS" id="CCDS9287.1">
    <molecule id="Q99549-1"/>
</dbReference>
<dbReference type="RefSeq" id="NP_059990.2">
    <molecule id="Q99549-1"/>
    <property type="nucleotide sequence ID" value="NM_017520.3"/>
</dbReference>
<dbReference type="RefSeq" id="XP_047286352.1">
    <molecule id="Q99549-2"/>
    <property type="nucleotide sequence ID" value="XM_047430396.1"/>
</dbReference>
<dbReference type="RefSeq" id="XP_054230588.1">
    <molecule id="Q99549-2"/>
    <property type="nucleotide sequence ID" value="XM_054374613.1"/>
</dbReference>
<dbReference type="RefSeq" id="XP_054230589.1">
    <molecule id="Q99549-1"/>
    <property type="nucleotide sequence ID" value="XM_054374614.1"/>
</dbReference>
<dbReference type="PDB" id="3LWE">
    <property type="method" value="X-ray"/>
    <property type="resolution" value="2.05 A"/>
    <property type="chains" value="A/B=55-116"/>
</dbReference>
<dbReference type="PDB" id="3QO2">
    <property type="method" value="X-ray"/>
    <property type="resolution" value="2.49 A"/>
    <property type="chains" value="A/B/C/D=55-116"/>
</dbReference>
<dbReference type="PDB" id="3R93">
    <property type="method" value="X-ray"/>
    <property type="resolution" value="2.06 A"/>
    <property type="chains" value="A/B/C/D=55-116"/>
</dbReference>
<dbReference type="PDB" id="3SVM">
    <property type="method" value="X-ray"/>
    <property type="resolution" value="2.31 A"/>
    <property type="chains" value="A=55-116"/>
</dbReference>
<dbReference type="PDB" id="6V2S">
    <property type="method" value="X-ray"/>
    <property type="resolution" value="1.60 A"/>
    <property type="chains" value="A/B=55-116"/>
</dbReference>
<dbReference type="PDB" id="7M5U">
    <property type="method" value="X-ray"/>
    <property type="resolution" value="2.02 A"/>
    <property type="chains" value="A=55-116"/>
</dbReference>
<dbReference type="PDB" id="8QFB">
    <property type="method" value="X-ray"/>
    <property type="resolution" value="3.04 A"/>
    <property type="chains" value="A/B/C/D/E/F/G/H=546-860"/>
</dbReference>
<dbReference type="PDBsum" id="3LWE"/>
<dbReference type="PDBsum" id="3QO2"/>
<dbReference type="PDBsum" id="3R93"/>
<dbReference type="PDBsum" id="3SVM"/>
<dbReference type="PDBsum" id="6V2S"/>
<dbReference type="PDBsum" id="7M5U"/>
<dbReference type="PDBsum" id="8QFB"/>
<dbReference type="SMR" id="Q99549"/>
<dbReference type="BioGRID" id="120119">
    <property type="interactions" value="97"/>
</dbReference>
<dbReference type="ComplexPortal" id="CPX-2348">
    <property type="entry name" value="HUSH epigenetic repressor complex"/>
</dbReference>
<dbReference type="CORUM" id="Q99549"/>
<dbReference type="DIP" id="DIP-56224N"/>
<dbReference type="FunCoup" id="Q99549">
    <property type="interactions" value="2811"/>
</dbReference>
<dbReference type="IntAct" id="Q99549">
    <property type="interactions" value="71"/>
</dbReference>
<dbReference type="MINT" id="Q99549"/>
<dbReference type="STRING" id="9606.ENSP00000355388"/>
<dbReference type="BindingDB" id="Q99549"/>
<dbReference type="ChEMBL" id="CHEMBL1741210"/>
<dbReference type="iPTMnet" id="Q99549"/>
<dbReference type="PhosphoSitePlus" id="Q99549"/>
<dbReference type="SwissPalm" id="Q99549"/>
<dbReference type="BioMuta" id="MPHOSPH8"/>
<dbReference type="DMDM" id="93204602"/>
<dbReference type="jPOST" id="Q99549"/>
<dbReference type="MassIVE" id="Q99549"/>
<dbReference type="PaxDb" id="9606-ENSP00000355388"/>
<dbReference type="PeptideAtlas" id="Q99549"/>
<dbReference type="ProteomicsDB" id="78321">
    <molecule id="Q99549-1"/>
</dbReference>
<dbReference type="ProteomicsDB" id="78322">
    <molecule id="Q99549-2"/>
</dbReference>
<dbReference type="Pumba" id="Q99549"/>
<dbReference type="ABCD" id="Q99549">
    <property type="antibodies" value="2 sequenced antibodies"/>
</dbReference>
<dbReference type="Antibodypedia" id="22243">
    <property type="antibodies" value="104 antibodies from 28 providers"/>
</dbReference>
<dbReference type="DNASU" id="54737"/>
<dbReference type="Ensembl" id="ENST00000361479.10">
    <molecule id="Q99549-1"/>
    <property type="protein sequence ID" value="ENSP00000355388.4"/>
    <property type="gene ID" value="ENSG00000196199.14"/>
</dbReference>
<dbReference type="GeneID" id="54737"/>
<dbReference type="KEGG" id="hsa:54737"/>
<dbReference type="MANE-Select" id="ENST00000361479.10">
    <property type="protein sequence ID" value="ENSP00000355388.4"/>
    <property type="RefSeq nucleotide sequence ID" value="NM_017520.4"/>
    <property type="RefSeq protein sequence ID" value="NP_059990.2"/>
</dbReference>
<dbReference type="UCSC" id="uc001umh.4">
    <molecule id="Q99549-1"/>
    <property type="organism name" value="human"/>
</dbReference>
<dbReference type="AGR" id="HGNC:29810"/>
<dbReference type="CTD" id="54737"/>
<dbReference type="DisGeNET" id="54737"/>
<dbReference type="GeneCards" id="MPHOSPH8"/>
<dbReference type="HGNC" id="HGNC:29810">
    <property type="gene designation" value="MPHOSPH8"/>
</dbReference>
<dbReference type="HPA" id="ENSG00000196199">
    <property type="expression patterns" value="Low tissue specificity"/>
</dbReference>
<dbReference type="MIM" id="611626">
    <property type="type" value="gene"/>
</dbReference>
<dbReference type="neXtProt" id="NX_Q99549"/>
<dbReference type="OpenTargets" id="ENSG00000196199"/>
<dbReference type="PharmGKB" id="PA162396090"/>
<dbReference type="VEuPathDB" id="HostDB:ENSG00000196199"/>
<dbReference type="eggNOG" id="KOG0504">
    <property type="taxonomic scope" value="Eukaryota"/>
</dbReference>
<dbReference type="eggNOG" id="KOG1911">
    <property type="taxonomic scope" value="Eukaryota"/>
</dbReference>
<dbReference type="GeneTree" id="ENSGT00730000111087"/>
<dbReference type="HOGENOM" id="CLU_332588_0_0_1"/>
<dbReference type="InParanoid" id="Q99549"/>
<dbReference type="OMA" id="PNRACHP"/>
<dbReference type="OrthoDB" id="10071877at2759"/>
<dbReference type="PAN-GO" id="Q99549">
    <property type="GO annotations" value="5 GO annotations based on evolutionary models"/>
</dbReference>
<dbReference type="PhylomeDB" id="Q99549"/>
<dbReference type="TreeFam" id="TF106394"/>
<dbReference type="PathwayCommons" id="Q99549"/>
<dbReference type="Reactome" id="R-HSA-9843970">
    <property type="pathway name" value="Regulation of endogenous retroelements by the Human Silencing Hub (HUSH) complex"/>
</dbReference>
<dbReference type="SignaLink" id="Q99549"/>
<dbReference type="BioGRID-ORCS" id="54737">
    <property type="hits" value="116 hits in 1165 CRISPR screens"/>
</dbReference>
<dbReference type="ChiTaRS" id="MPHOSPH8">
    <property type="organism name" value="human"/>
</dbReference>
<dbReference type="EvolutionaryTrace" id="Q99549"/>
<dbReference type="GeneWiki" id="MPHOSPH8"/>
<dbReference type="GenomeRNAi" id="54737"/>
<dbReference type="Pharos" id="Q99549">
    <property type="development level" value="Tbio"/>
</dbReference>
<dbReference type="PRO" id="PR:Q99549"/>
<dbReference type="Proteomes" id="UP000005640">
    <property type="component" value="Chromosome 13"/>
</dbReference>
<dbReference type="RNAct" id="Q99549">
    <property type="molecule type" value="protein"/>
</dbReference>
<dbReference type="Bgee" id="ENSG00000196199">
    <property type="expression patterns" value="Expressed in tendon of biceps brachii and 196 other cell types or tissues"/>
</dbReference>
<dbReference type="ExpressionAtlas" id="Q99549">
    <property type="expression patterns" value="baseline and differential"/>
</dbReference>
<dbReference type="GO" id="GO:0005737">
    <property type="term" value="C:cytoplasm"/>
    <property type="evidence" value="ECO:0000314"/>
    <property type="project" value="UniProtKB"/>
</dbReference>
<dbReference type="GO" id="GO:0005829">
    <property type="term" value="C:cytosol"/>
    <property type="evidence" value="ECO:0000314"/>
    <property type="project" value="HPA"/>
</dbReference>
<dbReference type="GO" id="GO:0000792">
    <property type="term" value="C:heterochromatin"/>
    <property type="evidence" value="ECO:0000314"/>
    <property type="project" value="UniProtKB"/>
</dbReference>
<dbReference type="GO" id="GO:0005730">
    <property type="term" value="C:nucleolus"/>
    <property type="evidence" value="ECO:0000314"/>
    <property type="project" value="HPA"/>
</dbReference>
<dbReference type="GO" id="GO:0005654">
    <property type="term" value="C:nucleoplasm"/>
    <property type="evidence" value="ECO:0000314"/>
    <property type="project" value="HPA"/>
</dbReference>
<dbReference type="GO" id="GO:0000786">
    <property type="term" value="C:nucleosome"/>
    <property type="evidence" value="ECO:0000314"/>
    <property type="project" value="UniProtKB"/>
</dbReference>
<dbReference type="GO" id="GO:0005634">
    <property type="term" value="C:nucleus"/>
    <property type="evidence" value="ECO:0000314"/>
    <property type="project" value="UniProtKB"/>
</dbReference>
<dbReference type="GO" id="GO:0005886">
    <property type="term" value="C:plasma membrane"/>
    <property type="evidence" value="ECO:0000314"/>
    <property type="project" value="HPA"/>
</dbReference>
<dbReference type="GO" id="GO:0003682">
    <property type="term" value="F:chromatin binding"/>
    <property type="evidence" value="ECO:0000314"/>
    <property type="project" value="UniProtKB"/>
</dbReference>
<dbReference type="GO" id="GO:0062072">
    <property type="term" value="F:histone H3K9me2/3 reader activity"/>
    <property type="evidence" value="ECO:0000314"/>
    <property type="project" value="UniProtKB"/>
</dbReference>
<dbReference type="GO" id="GO:0035064">
    <property type="term" value="F:methylated histone binding"/>
    <property type="evidence" value="ECO:0000318"/>
    <property type="project" value="GO_Central"/>
</dbReference>
<dbReference type="GO" id="GO:0140719">
    <property type="term" value="P:constitutive heterochromatin formation"/>
    <property type="evidence" value="ECO:0000314"/>
    <property type="project" value="UniProtKB"/>
</dbReference>
<dbReference type="GO" id="GO:0044027">
    <property type="term" value="P:negative regulation of gene expression via chromosomal CpG island methylation"/>
    <property type="evidence" value="ECO:0000315"/>
    <property type="project" value="UniProtKB"/>
</dbReference>
<dbReference type="GO" id="GO:0045814">
    <property type="term" value="P:negative regulation of gene expression, epigenetic"/>
    <property type="evidence" value="ECO:0000314"/>
    <property type="project" value="UniProtKB"/>
</dbReference>
<dbReference type="GO" id="GO:0141005">
    <property type="term" value="P:transposable element silencing by heterochromatin formation"/>
    <property type="evidence" value="ECO:0000314"/>
    <property type="project" value="UniProtKB"/>
</dbReference>
<dbReference type="CDD" id="cd18633">
    <property type="entry name" value="CD_MMP8"/>
    <property type="match status" value="1"/>
</dbReference>
<dbReference type="FunFam" id="2.40.50.40:FF:000022">
    <property type="entry name" value="M-phase phosphoprotein 8"/>
    <property type="match status" value="1"/>
</dbReference>
<dbReference type="FunFam" id="1.25.40.20:FF:000132">
    <property type="entry name" value="M-phase phosphoprotein 8 isoform X1"/>
    <property type="match status" value="1"/>
</dbReference>
<dbReference type="Gene3D" id="2.40.50.40">
    <property type="match status" value="1"/>
</dbReference>
<dbReference type="Gene3D" id="1.25.40.20">
    <property type="entry name" value="Ankyrin repeat-containing domain"/>
    <property type="match status" value="1"/>
</dbReference>
<dbReference type="IDEAL" id="IID00392"/>
<dbReference type="InterPro" id="IPR002110">
    <property type="entry name" value="Ankyrin_rpt"/>
</dbReference>
<dbReference type="InterPro" id="IPR036770">
    <property type="entry name" value="Ankyrin_rpt-contain_sf"/>
</dbReference>
<dbReference type="InterPro" id="IPR016197">
    <property type="entry name" value="Chromo-like_dom_sf"/>
</dbReference>
<dbReference type="InterPro" id="IPR000953">
    <property type="entry name" value="Chromo/chromo_shadow_dom"/>
</dbReference>
<dbReference type="InterPro" id="IPR023780">
    <property type="entry name" value="Chromo_domain"/>
</dbReference>
<dbReference type="InterPro" id="IPR023779">
    <property type="entry name" value="Chromodomain_CS"/>
</dbReference>
<dbReference type="InterPro" id="IPR050889">
    <property type="entry name" value="Dendritic_Spine_Reg/Scaffold"/>
</dbReference>
<dbReference type="PANTHER" id="PTHR24166:SF47">
    <property type="entry name" value="M-PHASE PHOSPHOPROTEIN 8"/>
    <property type="match status" value="1"/>
</dbReference>
<dbReference type="PANTHER" id="PTHR24166">
    <property type="entry name" value="ROLLING PEBBLES, ISOFORM B"/>
    <property type="match status" value="1"/>
</dbReference>
<dbReference type="Pfam" id="PF00023">
    <property type="entry name" value="Ank"/>
    <property type="match status" value="1"/>
</dbReference>
<dbReference type="Pfam" id="PF12796">
    <property type="entry name" value="Ank_2"/>
    <property type="match status" value="1"/>
</dbReference>
<dbReference type="Pfam" id="PF00385">
    <property type="entry name" value="Chromo"/>
    <property type="match status" value="1"/>
</dbReference>
<dbReference type="SMART" id="SM00248">
    <property type="entry name" value="ANK"/>
    <property type="match status" value="4"/>
</dbReference>
<dbReference type="SMART" id="SM00298">
    <property type="entry name" value="CHROMO"/>
    <property type="match status" value="1"/>
</dbReference>
<dbReference type="SUPFAM" id="SSF48403">
    <property type="entry name" value="Ankyrin repeat"/>
    <property type="match status" value="1"/>
</dbReference>
<dbReference type="SUPFAM" id="SSF54160">
    <property type="entry name" value="Chromo domain-like"/>
    <property type="match status" value="1"/>
</dbReference>
<dbReference type="PROSITE" id="PS50297">
    <property type="entry name" value="ANK_REP_REGION"/>
    <property type="match status" value="1"/>
</dbReference>
<dbReference type="PROSITE" id="PS50088">
    <property type="entry name" value="ANK_REPEAT"/>
    <property type="match status" value="3"/>
</dbReference>
<dbReference type="PROSITE" id="PS00598">
    <property type="entry name" value="CHROMO_1"/>
    <property type="match status" value="1"/>
</dbReference>
<dbReference type="PROSITE" id="PS50013">
    <property type="entry name" value="CHROMO_2"/>
    <property type="match status" value="1"/>
</dbReference>
<gene>
    <name evidence="20" type="primary">MPHOSPH8</name>
    <name type="synonym">MPP8</name>
</gene>
<feature type="chain" id="PRO_0000080244" description="M-phase phosphoprotein 8">
    <location>
        <begin position="1"/>
        <end position="860"/>
    </location>
</feature>
<feature type="domain" description="Chromo" evidence="2">
    <location>
        <begin position="59"/>
        <end position="118"/>
    </location>
</feature>
<feature type="repeat" description="ANK 1">
    <location>
        <begin position="600"/>
        <end position="629"/>
    </location>
</feature>
<feature type="repeat" description="ANK 2">
    <location>
        <begin position="633"/>
        <end position="662"/>
    </location>
</feature>
<feature type="repeat" description="ANK 3">
    <location>
        <begin position="666"/>
        <end position="695"/>
    </location>
</feature>
<feature type="repeat" description="ANK 4">
    <location>
        <begin position="699"/>
        <end position="728"/>
    </location>
</feature>
<feature type="region of interest" description="Histone H3K9me3 binding" evidence="5">
    <location>
        <begin position="80"/>
        <end position="87"/>
    </location>
</feature>
<feature type="region of interest" description="Disordered" evidence="3">
    <location>
        <begin position="129"/>
        <end position="191"/>
    </location>
</feature>
<feature type="region of interest" description="Disordered" evidence="3">
    <location>
        <begin position="206"/>
        <end position="440"/>
    </location>
</feature>
<feature type="region of interest" description="Interaction with humanin" evidence="9">
    <location>
        <begin position="431"/>
        <end position="560"/>
    </location>
</feature>
<feature type="region of interest" description="Disordered" evidence="3">
    <location>
        <begin position="458"/>
        <end position="496"/>
    </location>
</feature>
<feature type="compositionally biased region" description="Polar residues" evidence="3">
    <location>
        <begin position="129"/>
        <end position="141"/>
    </location>
</feature>
<feature type="compositionally biased region" description="Basic and acidic residues" evidence="3">
    <location>
        <begin position="159"/>
        <end position="169"/>
    </location>
</feature>
<feature type="compositionally biased region" description="Basic and acidic residues" evidence="3">
    <location>
        <begin position="177"/>
        <end position="186"/>
    </location>
</feature>
<feature type="compositionally biased region" description="Basic and acidic residues" evidence="3">
    <location>
        <begin position="206"/>
        <end position="249"/>
    </location>
</feature>
<feature type="compositionally biased region" description="Low complexity" evidence="3">
    <location>
        <begin position="259"/>
        <end position="268"/>
    </location>
</feature>
<feature type="compositionally biased region" description="Basic and acidic residues" evidence="3">
    <location>
        <begin position="280"/>
        <end position="314"/>
    </location>
</feature>
<feature type="compositionally biased region" description="Basic and acidic residues" evidence="3">
    <location>
        <begin position="336"/>
        <end position="377"/>
    </location>
</feature>
<feature type="compositionally biased region" description="Basic and acidic residues" evidence="3">
    <location>
        <begin position="408"/>
        <end position="440"/>
    </location>
</feature>
<feature type="site" description="Interaction with histone H3K9me3" evidence="5">
    <location>
        <position position="59"/>
    </location>
</feature>
<feature type="modified residue" description="N-acetylmethionine" evidence="24 28">
    <location>
        <position position="1"/>
    </location>
</feature>
<feature type="modified residue" description="Phosphoserine" evidence="21 22 25 26 27 29 30">
    <location>
        <position position="51"/>
    </location>
</feature>
<feature type="modified residue" description="Phosphoserine" evidence="1">
    <location>
        <position position="85"/>
    </location>
</feature>
<feature type="modified residue" description="Phosphoserine" evidence="23 25 26 27">
    <location>
        <position position="136"/>
    </location>
</feature>
<feature type="modified residue" description="Phosphoserine" evidence="23 25 26 27">
    <location>
        <position position="138"/>
    </location>
</feature>
<feature type="modified residue" description="Phosphothreonine" evidence="1">
    <location>
        <position position="144"/>
    </location>
</feature>
<feature type="modified residue" description="Phosphoserine; by CDK1" evidence="19 23 25">
    <location>
        <position position="149"/>
    </location>
</feature>
<feature type="modified residue" description="Phosphoserine; by CDK1" evidence="19">
    <location>
        <position position="164"/>
    </location>
</feature>
<feature type="modified residue" description="Phosphoserine" evidence="25">
    <location>
        <position position="188"/>
    </location>
</feature>
<feature type="modified residue" description="Phosphoserine" evidence="23 25">
    <location>
        <position position="189"/>
    </location>
</feature>
<feature type="modified residue" description="Phosphoserine" evidence="25">
    <location>
        <position position="192"/>
    </location>
</feature>
<feature type="modified residue" description="Phosphoserine" evidence="1">
    <location>
        <position position="266"/>
    </location>
</feature>
<feature type="modified residue" description="Phosphoserine" evidence="30">
    <location>
        <position position="272"/>
    </location>
</feature>
<feature type="modified residue" description="Phosphoserine" evidence="30">
    <location>
        <position position="279"/>
    </location>
</feature>
<feature type="modified residue" description="Phosphoserine" evidence="21 27">
    <location>
        <position position="319"/>
    </location>
</feature>
<feature type="modified residue" description="Phosphothreonine; by CDK1" evidence="19">
    <location>
        <position position="334"/>
    </location>
</feature>
<feature type="modified residue" description="Phosphothreonine; by CDK1" evidence="19">
    <location>
        <position position="385"/>
    </location>
</feature>
<feature type="modified residue" description="Phosphoserine" evidence="21 26 27">
    <location>
        <position position="392"/>
    </location>
</feature>
<feature type="modified residue" description="Phosphoserine" evidence="26">
    <location>
        <position position="400"/>
    </location>
</feature>
<feature type="modified residue" description="Phosphoserine" evidence="25 26 27 29">
    <location>
        <position position="403"/>
    </location>
</feature>
<feature type="modified residue" description="Phosphothreonine" evidence="26 29">
    <location>
        <position position="454"/>
    </location>
</feature>
<feature type="splice variant" id="VSP_031523" description="In isoform 2." evidence="16 17">
    <original>DSHFVYSFSPVAGPNKLFIRLTEAPSAKVKLLIGAYRVQLQ</original>
    <variation>TGSRSVVQAGVQWRGLQLTGVLTSQAQAILPPQPPNYLGLKMHATTSG</variation>
    <location>
        <begin position="820"/>
        <end position="860"/>
    </location>
</feature>
<feature type="mutagenesis site" description="Abolishes interaction with histone H3K9me3 and prevents recruitment of the HUSH complex to heterochromatin. Impaired ability to mediate silencing of unintegrated retroviral DNA." evidence="4 10 13">
    <original>W</original>
    <variation>A</variation>
    <location>
        <position position="80"/>
    </location>
</feature>
<feature type="mutagenesis site" description="In STA mutant; fails to dissociate from chromatin during early mitosis; when associated with A-164; A-334 and A-385." evidence="8">
    <original>S</original>
    <variation>A</variation>
    <location>
        <position position="149"/>
    </location>
</feature>
<feature type="mutagenesis site" description="In STA mutant; fails to dissociate from chromatin during early mitosis; when associated with A-149; A-334 and A-385." evidence="8">
    <original>S</original>
    <variation>A</variation>
    <location>
        <position position="164"/>
    </location>
</feature>
<feature type="mutagenesis site" description="In STA mutant; fails to dissociate from chromatin during early mitosis; when associated with A-149; A-164 and A-385." evidence="8">
    <original>T</original>
    <variation>A</variation>
    <location>
        <position position="334"/>
    </location>
</feature>
<feature type="mutagenesis site" description="In STA mutant; fails to dissociate from chromatin during early mitosis; when associated with A-149; A-164; and A-334." evidence="8">
    <original>T</original>
    <variation>A</variation>
    <location>
        <position position="385"/>
    </location>
</feature>
<feature type="sequence conflict" description="In Ref. 6; CAA66912." evidence="18" ref="6">
    <original>DGRQQ</original>
    <variation>GEFGI</variation>
    <location>
        <begin position="526"/>
        <end position="530"/>
    </location>
</feature>
<feature type="sequence conflict" description="In Ref. 5; AAH46214." evidence="18" ref="5">
    <original>Q</original>
    <variation>QPNRRDWAEFS</variation>
    <location>
        <position position="860"/>
    </location>
</feature>
<feature type="strand" evidence="31">
    <location>
        <begin position="61"/>
        <end position="70"/>
    </location>
</feature>
<feature type="strand" evidence="31">
    <location>
        <begin position="73"/>
        <end position="80"/>
    </location>
</feature>
<feature type="helix" evidence="31">
    <location>
        <begin position="85"/>
        <end position="87"/>
    </location>
</feature>
<feature type="strand" evidence="31">
    <location>
        <begin position="89"/>
        <end position="92"/>
    </location>
</feature>
<feature type="helix" evidence="31">
    <location>
        <begin position="93"/>
        <end position="96"/>
    </location>
</feature>
<feature type="helix" evidence="31">
    <location>
        <begin position="100"/>
        <end position="113"/>
    </location>
</feature>
<feature type="helix" evidence="32">
    <location>
        <begin position="569"/>
        <end position="575"/>
    </location>
</feature>
<feature type="helix" evidence="32">
    <location>
        <begin position="579"/>
        <end position="587"/>
    </location>
</feature>
<feature type="helix" evidence="32">
    <location>
        <begin position="604"/>
        <end position="610"/>
    </location>
</feature>
<feature type="helix" evidence="32">
    <location>
        <begin position="614"/>
        <end position="621"/>
    </location>
</feature>
<feature type="turn" evidence="32">
    <location>
        <begin position="622"/>
        <end position="624"/>
    </location>
</feature>
<feature type="helix" evidence="32">
    <location>
        <begin position="637"/>
        <end position="643"/>
    </location>
</feature>
<feature type="helix" evidence="32">
    <location>
        <begin position="647"/>
        <end position="655"/>
    </location>
</feature>
<feature type="helix" evidence="32">
    <location>
        <begin position="670"/>
        <end position="677"/>
    </location>
</feature>
<feature type="helix" evidence="32">
    <location>
        <begin position="680"/>
        <end position="688"/>
    </location>
</feature>
<feature type="helix" evidence="32">
    <location>
        <begin position="703"/>
        <end position="709"/>
    </location>
</feature>
<feature type="helix" evidence="32">
    <location>
        <begin position="713"/>
        <end position="738"/>
    </location>
</feature>
<feature type="strand" evidence="32">
    <location>
        <begin position="741"/>
        <end position="749"/>
    </location>
</feature>
<feature type="strand" evidence="32">
    <location>
        <begin position="752"/>
        <end position="755"/>
    </location>
</feature>
<feature type="helix" evidence="32">
    <location>
        <begin position="756"/>
        <end position="758"/>
    </location>
</feature>
<feature type="strand" evidence="32">
    <location>
        <begin position="760"/>
        <end position="768"/>
    </location>
</feature>
<feature type="strand" evidence="32">
    <location>
        <begin position="778"/>
        <end position="790"/>
    </location>
</feature>
<feature type="strand" evidence="32">
    <location>
        <begin position="793"/>
        <end position="801"/>
    </location>
</feature>
<feature type="strand" evidence="32">
    <location>
        <begin position="804"/>
        <end position="809"/>
    </location>
</feature>
<feature type="strand" evidence="32">
    <location>
        <begin position="812"/>
        <end position="814"/>
    </location>
</feature>
<feature type="strand" evidence="32">
    <location>
        <begin position="822"/>
        <end position="826"/>
    </location>
</feature>
<feature type="strand" evidence="32">
    <location>
        <begin position="831"/>
        <end position="840"/>
    </location>
</feature>
<feature type="strand" evidence="32">
    <location>
        <begin position="849"/>
        <end position="859"/>
    </location>
</feature>
<protein>
    <recommendedName>
        <fullName>M-phase phosphoprotein 8</fullName>
    </recommendedName>
    <alternativeName>
        <fullName evidence="15">Two hybrid-associated protein 3 with RanBPM</fullName>
        <shortName evidence="15">Twa3</shortName>
    </alternativeName>
</protein>
<accession>Q99549</accession>
<accession>B7Z6F9</accession>
<accession>Q5JPE5</accession>
<accession>Q5JTQ0</accession>
<accession>Q86TK3</accession>
<accession>Q96MK4</accession>
<accession>Q9BTP1</accession>
<reference key="1">
    <citation type="journal article" date="2004" name="Nat. Genet.">
        <title>Complete sequencing and characterization of 21,243 full-length human cDNAs.</title>
        <authorList>
            <person name="Ota T."/>
            <person name="Suzuki Y."/>
            <person name="Nishikawa T."/>
            <person name="Otsuki T."/>
            <person name="Sugiyama T."/>
            <person name="Irie R."/>
            <person name="Wakamatsu A."/>
            <person name="Hayashi K."/>
            <person name="Sato H."/>
            <person name="Nagai K."/>
            <person name="Kimura K."/>
            <person name="Makita H."/>
            <person name="Sekine M."/>
            <person name="Obayashi M."/>
            <person name="Nishi T."/>
            <person name="Shibahara T."/>
            <person name="Tanaka T."/>
            <person name="Ishii S."/>
            <person name="Yamamoto J."/>
            <person name="Saito K."/>
            <person name="Kawai Y."/>
            <person name="Isono Y."/>
            <person name="Nakamura Y."/>
            <person name="Nagahari K."/>
            <person name="Murakami K."/>
            <person name="Yasuda T."/>
            <person name="Iwayanagi T."/>
            <person name="Wagatsuma M."/>
            <person name="Shiratori A."/>
            <person name="Sudo H."/>
            <person name="Hosoiri T."/>
            <person name="Kaku Y."/>
            <person name="Kodaira H."/>
            <person name="Kondo H."/>
            <person name="Sugawara M."/>
            <person name="Takahashi M."/>
            <person name="Kanda K."/>
            <person name="Yokoi T."/>
            <person name="Furuya T."/>
            <person name="Kikkawa E."/>
            <person name="Omura Y."/>
            <person name="Abe K."/>
            <person name="Kamihara K."/>
            <person name="Katsuta N."/>
            <person name="Sato K."/>
            <person name="Tanikawa M."/>
            <person name="Yamazaki M."/>
            <person name="Ninomiya K."/>
            <person name="Ishibashi T."/>
            <person name="Yamashita H."/>
            <person name="Murakawa K."/>
            <person name="Fujimori K."/>
            <person name="Tanai H."/>
            <person name="Kimata M."/>
            <person name="Watanabe M."/>
            <person name="Hiraoka S."/>
            <person name="Chiba Y."/>
            <person name="Ishida S."/>
            <person name="Ono Y."/>
            <person name="Takiguchi S."/>
            <person name="Watanabe S."/>
            <person name="Yosida M."/>
            <person name="Hotuta T."/>
            <person name="Kusano J."/>
            <person name="Kanehori K."/>
            <person name="Takahashi-Fujii A."/>
            <person name="Hara H."/>
            <person name="Tanase T.-O."/>
            <person name="Nomura Y."/>
            <person name="Togiya S."/>
            <person name="Komai F."/>
            <person name="Hara R."/>
            <person name="Takeuchi K."/>
            <person name="Arita M."/>
            <person name="Imose N."/>
            <person name="Musashino K."/>
            <person name="Yuuki H."/>
            <person name="Oshima A."/>
            <person name="Sasaki N."/>
            <person name="Aotsuka S."/>
            <person name="Yoshikawa Y."/>
            <person name="Matsunawa H."/>
            <person name="Ichihara T."/>
            <person name="Shiohata N."/>
            <person name="Sano S."/>
            <person name="Moriya S."/>
            <person name="Momiyama H."/>
            <person name="Satoh N."/>
            <person name="Takami S."/>
            <person name="Terashima Y."/>
            <person name="Suzuki O."/>
            <person name="Nakagawa S."/>
            <person name="Senoh A."/>
            <person name="Mizoguchi H."/>
            <person name="Goto Y."/>
            <person name="Shimizu F."/>
            <person name="Wakebe H."/>
            <person name="Hishigaki H."/>
            <person name="Watanabe T."/>
            <person name="Sugiyama A."/>
            <person name="Takemoto M."/>
            <person name="Kawakami B."/>
            <person name="Yamazaki M."/>
            <person name="Watanabe K."/>
            <person name="Kumagai A."/>
            <person name="Itakura S."/>
            <person name="Fukuzumi Y."/>
            <person name="Fujimori Y."/>
            <person name="Komiyama M."/>
            <person name="Tashiro H."/>
            <person name="Tanigami A."/>
            <person name="Fujiwara T."/>
            <person name="Ono T."/>
            <person name="Yamada K."/>
            <person name="Fujii Y."/>
            <person name="Ozaki K."/>
            <person name="Hirao M."/>
            <person name="Ohmori Y."/>
            <person name="Kawabata A."/>
            <person name="Hikiji T."/>
            <person name="Kobatake N."/>
            <person name="Inagaki H."/>
            <person name="Ikema Y."/>
            <person name="Okamoto S."/>
            <person name="Okitani R."/>
            <person name="Kawakami T."/>
            <person name="Noguchi S."/>
            <person name="Itoh T."/>
            <person name="Shigeta K."/>
            <person name="Senba T."/>
            <person name="Matsumura K."/>
            <person name="Nakajima Y."/>
            <person name="Mizuno T."/>
            <person name="Morinaga M."/>
            <person name="Sasaki M."/>
            <person name="Togashi T."/>
            <person name="Oyama M."/>
            <person name="Hata H."/>
            <person name="Watanabe M."/>
            <person name="Komatsu T."/>
            <person name="Mizushima-Sugano J."/>
            <person name="Satoh T."/>
            <person name="Shirai Y."/>
            <person name="Takahashi Y."/>
            <person name="Nakagawa K."/>
            <person name="Okumura K."/>
            <person name="Nagase T."/>
            <person name="Nomura N."/>
            <person name="Kikuchi H."/>
            <person name="Masuho Y."/>
            <person name="Yamashita R."/>
            <person name="Nakai K."/>
            <person name="Yada T."/>
            <person name="Nakamura Y."/>
            <person name="Ohara O."/>
            <person name="Isogai T."/>
            <person name="Sugano S."/>
        </authorList>
    </citation>
    <scope>NUCLEOTIDE SEQUENCE [LARGE SCALE MRNA] (ISOFORM 2)</scope>
    <scope>NUCLEOTIDE SEQUENCE [LARGE SCALE MRNA] OF 619-860 (ISOFORM 1)</scope>
    <source>
        <tissue>Placenta</tissue>
    </source>
</reference>
<reference key="2">
    <citation type="journal article" date="2007" name="BMC Genomics">
        <title>The full-ORF clone resource of the German cDNA consortium.</title>
        <authorList>
            <person name="Bechtel S."/>
            <person name="Rosenfelder H."/>
            <person name="Duda A."/>
            <person name="Schmidt C.P."/>
            <person name="Ernst U."/>
            <person name="Wellenreuther R."/>
            <person name="Mehrle A."/>
            <person name="Schuster C."/>
            <person name="Bahr A."/>
            <person name="Bloecker H."/>
            <person name="Heubner D."/>
            <person name="Hoerlein A."/>
            <person name="Michel G."/>
            <person name="Wedler H."/>
            <person name="Koehrer K."/>
            <person name="Ottenwaelder B."/>
            <person name="Poustka A."/>
            <person name="Wiemann S."/>
            <person name="Schupp I."/>
        </authorList>
    </citation>
    <scope>NUCLEOTIDE SEQUENCE [LARGE SCALE MRNA] (ISOFORM 2)</scope>
    <source>
        <tissue>Lymph node</tissue>
    </source>
</reference>
<reference key="3">
    <citation type="journal article" date="2004" name="Nature">
        <title>The DNA sequence and analysis of human chromosome 13.</title>
        <authorList>
            <person name="Dunham A."/>
            <person name="Matthews L.H."/>
            <person name="Burton J."/>
            <person name="Ashurst J.L."/>
            <person name="Howe K.L."/>
            <person name="Ashcroft K.J."/>
            <person name="Beare D.M."/>
            <person name="Burford D.C."/>
            <person name="Hunt S.E."/>
            <person name="Griffiths-Jones S."/>
            <person name="Jones M.C."/>
            <person name="Keenan S.J."/>
            <person name="Oliver K."/>
            <person name="Scott C.E."/>
            <person name="Ainscough R."/>
            <person name="Almeida J.P."/>
            <person name="Ambrose K.D."/>
            <person name="Andrews D.T."/>
            <person name="Ashwell R.I.S."/>
            <person name="Babbage A.K."/>
            <person name="Bagguley C.L."/>
            <person name="Bailey J."/>
            <person name="Bannerjee R."/>
            <person name="Barlow K.F."/>
            <person name="Bates K."/>
            <person name="Beasley H."/>
            <person name="Bird C.P."/>
            <person name="Bray-Allen S."/>
            <person name="Brown A.J."/>
            <person name="Brown J.Y."/>
            <person name="Burrill W."/>
            <person name="Carder C."/>
            <person name="Carter N.P."/>
            <person name="Chapman J.C."/>
            <person name="Clamp M.E."/>
            <person name="Clark S.Y."/>
            <person name="Clarke G."/>
            <person name="Clee C.M."/>
            <person name="Clegg S.C."/>
            <person name="Cobley V."/>
            <person name="Collins J.E."/>
            <person name="Corby N."/>
            <person name="Coville G.J."/>
            <person name="Deloukas P."/>
            <person name="Dhami P."/>
            <person name="Dunham I."/>
            <person name="Dunn M."/>
            <person name="Earthrowl M.E."/>
            <person name="Ellington A.G."/>
            <person name="Faulkner L."/>
            <person name="Frankish A.G."/>
            <person name="Frankland J."/>
            <person name="French L."/>
            <person name="Garner P."/>
            <person name="Garnett J."/>
            <person name="Gilbert J.G.R."/>
            <person name="Gilson C.J."/>
            <person name="Ghori J."/>
            <person name="Grafham D.V."/>
            <person name="Gribble S.M."/>
            <person name="Griffiths C."/>
            <person name="Hall R.E."/>
            <person name="Hammond S."/>
            <person name="Harley J.L."/>
            <person name="Hart E.A."/>
            <person name="Heath P.D."/>
            <person name="Howden P.J."/>
            <person name="Huckle E.J."/>
            <person name="Hunt P.J."/>
            <person name="Hunt A.R."/>
            <person name="Johnson C."/>
            <person name="Johnson D."/>
            <person name="Kay M."/>
            <person name="Kimberley A.M."/>
            <person name="King A."/>
            <person name="Laird G.K."/>
            <person name="Langford C.J."/>
            <person name="Lawlor S."/>
            <person name="Leongamornlert D.A."/>
            <person name="Lloyd D.M."/>
            <person name="Lloyd C."/>
            <person name="Loveland J.E."/>
            <person name="Lovell J."/>
            <person name="Martin S."/>
            <person name="Mashreghi-Mohammadi M."/>
            <person name="McLaren S.J."/>
            <person name="McMurray A."/>
            <person name="Milne S."/>
            <person name="Moore M.J.F."/>
            <person name="Nickerson T."/>
            <person name="Palmer S.A."/>
            <person name="Pearce A.V."/>
            <person name="Peck A.I."/>
            <person name="Pelan S."/>
            <person name="Phillimore B."/>
            <person name="Porter K.M."/>
            <person name="Rice C.M."/>
            <person name="Searle S."/>
            <person name="Sehra H.K."/>
            <person name="Shownkeen R."/>
            <person name="Skuce C.D."/>
            <person name="Smith M."/>
            <person name="Steward C.A."/>
            <person name="Sycamore N."/>
            <person name="Tester J."/>
            <person name="Thomas D.W."/>
            <person name="Tracey A."/>
            <person name="Tromans A."/>
            <person name="Tubby B."/>
            <person name="Wall M."/>
            <person name="Wallis J.M."/>
            <person name="West A.P."/>
            <person name="Whitehead S.L."/>
            <person name="Willey D.L."/>
            <person name="Wilming L."/>
            <person name="Wray P.W."/>
            <person name="Wright M.W."/>
            <person name="Young L."/>
            <person name="Coulson A."/>
            <person name="Durbin R.M."/>
            <person name="Hubbard T."/>
            <person name="Sulston J.E."/>
            <person name="Beck S."/>
            <person name="Bentley D.R."/>
            <person name="Rogers J."/>
            <person name="Ross M.T."/>
        </authorList>
    </citation>
    <scope>NUCLEOTIDE SEQUENCE [LARGE SCALE GENOMIC DNA]</scope>
</reference>
<reference key="4">
    <citation type="submission" date="2005-07" db="EMBL/GenBank/DDBJ databases">
        <authorList>
            <person name="Mural R.J."/>
            <person name="Istrail S."/>
            <person name="Sutton G.G."/>
            <person name="Florea L."/>
            <person name="Halpern A.L."/>
            <person name="Mobarry C.M."/>
            <person name="Lippert R."/>
            <person name="Walenz B."/>
            <person name="Shatkay H."/>
            <person name="Dew I."/>
            <person name="Miller J.R."/>
            <person name="Flanigan M.J."/>
            <person name="Edwards N.J."/>
            <person name="Bolanos R."/>
            <person name="Fasulo D."/>
            <person name="Halldorsson B.V."/>
            <person name="Hannenhalli S."/>
            <person name="Turner R."/>
            <person name="Yooseph S."/>
            <person name="Lu F."/>
            <person name="Nusskern D.R."/>
            <person name="Shue B.C."/>
            <person name="Zheng X.H."/>
            <person name="Zhong F."/>
            <person name="Delcher A.L."/>
            <person name="Huson D.H."/>
            <person name="Kravitz S.A."/>
            <person name="Mouchard L."/>
            <person name="Reinert K."/>
            <person name="Remington K.A."/>
            <person name="Clark A.G."/>
            <person name="Waterman M.S."/>
            <person name="Eichler E.E."/>
            <person name="Adams M.D."/>
            <person name="Hunkapiller M.W."/>
            <person name="Myers E.W."/>
            <person name="Venter J.C."/>
        </authorList>
    </citation>
    <scope>NUCLEOTIDE SEQUENCE [LARGE SCALE GENOMIC DNA]</scope>
</reference>
<reference key="5">
    <citation type="journal article" date="2004" name="Genome Res.">
        <title>The status, quality, and expansion of the NIH full-length cDNA project: the Mammalian Gene Collection (MGC).</title>
        <authorList>
            <consortium name="The MGC Project Team"/>
        </authorList>
    </citation>
    <scope>NUCLEOTIDE SEQUENCE [LARGE SCALE MRNA] (ISOFORM 1)</scope>
    <source>
        <tissue>Pancreas</tissue>
        <tissue>PNS</tissue>
    </source>
</reference>
<reference key="6">
    <citation type="journal article" date="1996" name="Mol. Biol. Cell">
        <title>Identification of novel M phase phosphoproteins by expression cloning.</title>
        <authorList>
            <person name="Matsumoto-Taniura N."/>
            <person name="Pirollet F."/>
            <person name="Monroe R."/>
            <person name="Gerace L."/>
            <person name="Westendorf J.M."/>
        </authorList>
    </citation>
    <scope>NUCLEOTIDE SEQUENCE [MRNA] OF 228-532 (ISOFORMS 1/2)</scope>
    <scope>SUBCELLULAR LOCATION</scope>
    <scope>PHOSPHORYLATION</scope>
    <source>
        <tissue>Lymphoblast</tissue>
    </source>
</reference>
<reference key="7">
    <citation type="journal article" date="2003" name="Gene">
        <title>A novel nuclear protein, Twa1, and Muskelin comprise a complex with RanBPM.</title>
        <authorList>
            <person name="Umeda M."/>
            <person name="Nishitani H."/>
            <person name="Nishimoto T."/>
        </authorList>
    </citation>
    <scope>IDENTIFICATION</scope>
</reference>
<reference key="8">
    <citation type="journal article" date="2006" name="Cell">
        <title>Global, in vivo, and site-specific phosphorylation dynamics in signaling networks.</title>
        <authorList>
            <person name="Olsen J.V."/>
            <person name="Blagoev B."/>
            <person name="Gnad F."/>
            <person name="Macek B."/>
            <person name="Kumar C."/>
            <person name="Mortensen P."/>
            <person name="Mann M."/>
        </authorList>
    </citation>
    <scope>PHOSPHORYLATION [LARGE SCALE ANALYSIS] AT SER-51; SER-319 AND SER-392</scope>
    <scope>IDENTIFICATION BY MASS SPECTROMETRY [LARGE SCALE ANALYSIS]</scope>
    <source>
        <tissue>Cervix carcinoma</tissue>
    </source>
</reference>
<reference key="9">
    <citation type="journal article" date="2008" name="Proc. Natl. Acad. Sci. U.S.A.">
        <title>A quantitative atlas of mitotic phosphorylation.</title>
        <authorList>
            <person name="Dephoure N."/>
            <person name="Zhou C."/>
            <person name="Villen J."/>
            <person name="Beausoleil S.A."/>
            <person name="Bakalarski C.E."/>
            <person name="Elledge S.J."/>
            <person name="Gygi S.P."/>
        </authorList>
    </citation>
    <scope>PHOSPHORYLATION [LARGE SCALE ANALYSIS] AT SER-136; SER-138; SER-149 AND SER-189</scope>
    <scope>IDENTIFICATION BY MASS SPECTROMETRY [LARGE SCALE ANALYSIS]</scope>
    <source>
        <tissue>Cervix carcinoma</tissue>
    </source>
</reference>
<reference key="10">
    <citation type="journal article" date="2008" name="Proteomics">
        <title>Large-scale phosphoproteome analysis of human liver tissue by enrichment and fractionation of phosphopeptides with strong anion exchange chromatography.</title>
        <authorList>
            <person name="Han G."/>
            <person name="Ye M."/>
            <person name="Zhou H."/>
            <person name="Jiang X."/>
            <person name="Feng S."/>
            <person name="Jiang X."/>
            <person name="Tian R."/>
            <person name="Wan D."/>
            <person name="Zou H."/>
            <person name="Gu J."/>
        </authorList>
    </citation>
    <scope>PHOSPHORYLATION [LARGE SCALE ANALYSIS] AT SER-51</scope>
    <scope>IDENTIFICATION BY MASS SPECTROMETRY [LARGE SCALE ANALYSIS]</scope>
    <source>
        <tissue>Liver</tissue>
    </source>
</reference>
<reference key="11">
    <citation type="journal article" date="2009" name="Anal. Chem.">
        <title>Lys-N and trypsin cover complementary parts of the phosphoproteome in a refined SCX-based approach.</title>
        <authorList>
            <person name="Gauci S."/>
            <person name="Helbig A.O."/>
            <person name="Slijper M."/>
            <person name="Krijgsveld J."/>
            <person name="Heck A.J."/>
            <person name="Mohammed S."/>
        </authorList>
    </citation>
    <scope>ACETYLATION [LARGE SCALE ANALYSIS] AT MET-1</scope>
    <scope>IDENTIFICATION BY MASS SPECTROMETRY [LARGE SCALE ANALYSIS]</scope>
</reference>
<reference key="12">
    <citation type="journal article" date="2009" name="Sci. Signal.">
        <title>Quantitative phosphoproteomic analysis of T cell receptor signaling reveals system-wide modulation of protein-protein interactions.</title>
        <authorList>
            <person name="Mayya V."/>
            <person name="Lundgren D.H."/>
            <person name="Hwang S.-I."/>
            <person name="Rezaul K."/>
            <person name="Wu L."/>
            <person name="Eng J.K."/>
            <person name="Rodionov V."/>
            <person name="Han D.K."/>
        </authorList>
    </citation>
    <scope>PHOSPHORYLATION [LARGE SCALE ANALYSIS] AT SER-51; SER-136; SER-138; SER-149; SER-188; SER-189; SER-192 AND SER-403</scope>
    <scope>IDENTIFICATION BY MASS SPECTROMETRY [LARGE SCALE ANALYSIS]</scope>
    <source>
        <tissue>Leukemic T-cell</tissue>
    </source>
</reference>
<reference key="13">
    <citation type="journal article" date="2010" name="EMBO J.">
        <title>Methyl-H3K9-binding protein MPP8 mediates E-cadherin gene silencing and promotes tumour cell motility and invasion.</title>
        <authorList>
            <person name="Kokura K."/>
            <person name="Sun L."/>
            <person name="Bedford M.T."/>
            <person name="Fang J."/>
        </authorList>
    </citation>
    <scope>FUNCTION</scope>
    <scope>INTERACTION WITH HISTONE H3K9ME3; DNMT3A; EHMT1 AND SETDB1</scope>
    <scope>SUBCELLULAR LOCATION</scope>
    <scope>MUTAGENESIS OF TRP-80</scope>
</reference>
<reference key="14">
    <citation type="journal article" date="2010" name="Sci. Signal.">
        <title>Quantitative phosphoproteomics reveals widespread full phosphorylation site occupancy during mitosis.</title>
        <authorList>
            <person name="Olsen J.V."/>
            <person name="Vermeulen M."/>
            <person name="Santamaria A."/>
            <person name="Kumar C."/>
            <person name="Miller M.L."/>
            <person name="Jensen L.J."/>
            <person name="Gnad F."/>
            <person name="Cox J."/>
            <person name="Jensen T.S."/>
            <person name="Nigg E.A."/>
            <person name="Brunak S."/>
            <person name="Mann M."/>
        </authorList>
    </citation>
    <scope>PHOSPHORYLATION [LARGE SCALE ANALYSIS] AT SER-51; SER-136; SER-138; SER-392; SER-400; SER-403 AND THR-454</scope>
    <scope>IDENTIFICATION BY MASS SPECTROMETRY [LARGE SCALE ANALYSIS]</scope>
    <source>
        <tissue>Cervix carcinoma</tissue>
    </source>
</reference>
<reference key="15">
    <citation type="journal article" date="2011" name="Sci. Signal.">
        <title>System-wide temporal characterization of the proteome and phosphoproteome of human embryonic stem cell differentiation.</title>
        <authorList>
            <person name="Rigbolt K.T."/>
            <person name="Prokhorova T.A."/>
            <person name="Akimov V."/>
            <person name="Henningsen J."/>
            <person name="Johansen P.T."/>
            <person name="Kratchmarova I."/>
            <person name="Kassem M."/>
            <person name="Mann M."/>
            <person name="Olsen J.V."/>
            <person name="Blagoev B."/>
        </authorList>
    </citation>
    <scope>PHOSPHORYLATION [LARGE SCALE ANALYSIS] AT SER-51; SER-136; SER-138; SER-319; SER-392 AND SER-403</scope>
    <scope>IDENTIFICATION BY MASS SPECTROMETRY [LARGE SCALE ANALYSIS]</scope>
</reference>
<reference key="16">
    <citation type="journal article" date="2012" name="Proc. Natl. Acad. Sci. U.S.A.">
        <title>N-terminal acetylome analyses and functional insights of the N-terminal acetyltransferase NatB.</title>
        <authorList>
            <person name="Van Damme P."/>
            <person name="Lasa M."/>
            <person name="Polevoda B."/>
            <person name="Gazquez C."/>
            <person name="Elosegui-Artola A."/>
            <person name="Kim D.S."/>
            <person name="De Juan-Pardo E."/>
            <person name="Demeyer K."/>
            <person name="Hole K."/>
            <person name="Larrea E."/>
            <person name="Timmerman E."/>
            <person name="Prieto J."/>
            <person name="Arnesen T."/>
            <person name="Sherman F."/>
            <person name="Gevaert K."/>
            <person name="Aldabe R."/>
        </authorList>
    </citation>
    <scope>ACETYLATION [LARGE SCALE ANALYSIS] AT MET-1</scope>
    <scope>IDENTIFICATION BY MASS SPECTROMETRY [LARGE SCALE ANALYSIS]</scope>
</reference>
<reference key="17">
    <citation type="journal article" date="2013" name="Biochem. Biophys. Res. Commun.">
        <title>Mitotic phosphorylation of MPP8 by cyclin-dependent kinases regulates chromatin dissociation.</title>
        <authorList>
            <person name="Nishigaki M."/>
            <person name="Kawada Y."/>
            <person name="Misaki T."/>
            <person name="Murata K."/>
            <person name="Goshima T."/>
            <person name="Hirokawa T."/>
            <person name="Yamada C."/>
            <person name="Shimada M."/>
            <person name="Nakanishi M."/>
        </authorList>
    </citation>
    <scope>PHOSPHORYLATION AT SER-149; SER-164; THR-334 AND THR-385</scope>
    <scope>MUTAGENESIS OF SER-149; SER-164; THR-334 AND THR-385</scope>
</reference>
<reference key="18">
    <citation type="journal article" date="2013" name="J. Pept. Sci.">
        <title>Humanin binds MPP8: mapping interaction sites of the peptide and protein.</title>
        <authorList>
            <person name="Maximov V.V."/>
            <person name="Martynenko A.V."/>
            <person name="Arman I.P."/>
            <person name="Tarantul V.Z."/>
        </authorList>
    </citation>
    <scope>INTERACTION WITH HUMANIN</scope>
</reference>
<reference key="19">
    <citation type="journal article" date="2013" name="J. Proteome Res.">
        <title>Toward a comprehensive characterization of a human cancer cell phosphoproteome.</title>
        <authorList>
            <person name="Zhou H."/>
            <person name="Di Palma S."/>
            <person name="Preisinger C."/>
            <person name="Peng M."/>
            <person name="Polat A.N."/>
            <person name="Heck A.J."/>
            <person name="Mohammed S."/>
        </authorList>
    </citation>
    <scope>PHOSPHORYLATION [LARGE SCALE ANALYSIS] AT SER-51; SER-403 AND THR-454</scope>
    <scope>IDENTIFICATION BY MASS SPECTROMETRY [LARGE SCALE ANALYSIS]</scope>
    <source>
        <tissue>Cervix carcinoma</tissue>
        <tissue>Erythroleukemia</tissue>
    </source>
</reference>
<reference key="20">
    <citation type="journal article" date="2014" name="J. Proteomics">
        <title>An enzyme assisted RP-RPLC approach for in-depth analysis of human liver phosphoproteome.</title>
        <authorList>
            <person name="Bian Y."/>
            <person name="Song C."/>
            <person name="Cheng K."/>
            <person name="Dong M."/>
            <person name="Wang F."/>
            <person name="Huang J."/>
            <person name="Sun D."/>
            <person name="Wang L."/>
            <person name="Ye M."/>
            <person name="Zou H."/>
        </authorList>
    </citation>
    <scope>PHOSPHORYLATION [LARGE SCALE ANALYSIS] AT SER-51; SER-272 AND SER-279</scope>
    <scope>IDENTIFICATION BY MASS SPECTROMETRY [LARGE SCALE ANALYSIS]</scope>
    <source>
        <tissue>Liver</tissue>
    </source>
</reference>
<reference key="21">
    <citation type="journal article" date="2015" name="Science">
        <title>Epigenetic silencing by the HUSH complex mediates position-effect variegation in human cells.</title>
        <authorList>
            <person name="Tchasovnikarova I.A."/>
            <person name="Timms R.T."/>
            <person name="Matheson N.J."/>
            <person name="Wals K."/>
            <person name="Antrobus R."/>
            <person name="Goettgens B."/>
            <person name="Dougan G."/>
            <person name="Dawson M.A."/>
            <person name="Lehner P.J."/>
        </authorList>
    </citation>
    <scope>FUNCTION</scope>
    <scope>SUBCELLULAR LOCATION</scope>
    <scope>IDENTIFICATION IN THE HUSH COMPLEX</scope>
    <scope>MUTAGENESIS OF TRP-80</scope>
</reference>
<reference key="22">
    <citation type="journal article" date="2017" name="Nat. Genet.">
        <title>Hyperactivation of HUSH complex function by Charcot-Marie-Tooth disease mutation in MORC2.</title>
        <authorList>
            <person name="Tchasovnikarova I.A."/>
            <person name="Timms R.T."/>
            <person name="Douse C.H."/>
            <person name="Roberts R.C."/>
            <person name="Dougan G."/>
            <person name="Kingston R.E."/>
            <person name="Modis Y."/>
            <person name="Lehner P.J."/>
        </authorList>
    </citation>
    <scope>FUNCTION</scope>
    <scope>SUBCELLULAR LOCATION</scope>
    <scope>INTERACTION WITH MORC2</scope>
</reference>
<reference key="23">
    <citation type="journal article" date="2018" name="Nature">
        <title>Selective silencing of euchromatic L1s revealed by genome-wide screens for L1 regulators.</title>
        <authorList>
            <person name="Liu N."/>
            <person name="Lee C.H."/>
            <person name="Swigut T."/>
            <person name="Grow E."/>
            <person name="Gu B."/>
            <person name="Bassik M.C."/>
            <person name="Wysocka J."/>
        </authorList>
    </citation>
    <scope>FUNCTION</scope>
</reference>
<reference key="24">
    <citation type="journal article" date="2018" name="Nature">
        <title>NP220 mediates silencing of unintegrated retroviral DNA.</title>
        <authorList>
            <person name="Zhu Y."/>
            <person name="Wang G.Z."/>
            <person name="Cingoez O."/>
            <person name="Goff S.P."/>
        </authorList>
    </citation>
    <scope>FUNCTION</scope>
    <scope>INTERACTION WITH ZNF638</scope>
    <scope>MUTAGENESIS OF TRP-80</scope>
</reference>
<reference key="25">
    <citation type="journal article" date="2011" name="J. Mol. Biol.">
        <title>Structural insights for MPP8 chromodomain interaction with histone H3 lysine 9: potential effect of phosphorylation on methyl-lysine binding.</title>
        <authorList>
            <person name="Chang Y."/>
            <person name="Horton J.R."/>
            <person name="Bedford M.T."/>
            <person name="Zhang X."/>
            <person name="Cheng X."/>
        </authorList>
    </citation>
    <scope>X-RAY CRYSTALLOGRAPHY (2.49 ANGSTROMS) OF 55-116 IN COMPLEX WITH HISTONE H3K9ME3 PEPTIDE</scope>
    <scope>DOMAIN CHROMO</scope>
    <scope>SUBUNIT</scope>
</reference>
<reference key="26">
    <citation type="journal article" date="2011" name="Nat. Commun.">
        <title>MPP8 mediates the interactions between DNA methyltransferase Dnmt3a and H3K9 methyltransferase GLP/G9a.</title>
        <authorList>
            <person name="Chang Y."/>
            <person name="Sun L."/>
            <person name="Kokura K."/>
            <person name="Horton J.R."/>
            <person name="Fukuda M."/>
            <person name="Espejo A."/>
            <person name="Izumi V."/>
            <person name="Koomen J.M."/>
            <person name="Bedford M.T."/>
            <person name="Zhang X."/>
            <person name="Shinkai Y."/>
            <person name="Fang J."/>
            <person name="Cheng X."/>
        </authorList>
    </citation>
    <scope>X-RAY CRYSTALLOGRAPHY (2.31 ANGSTROMS) OF 55-116 IN COMPLEX WITH DNMT3A</scope>
</reference>
<reference key="27">
    <citation type="journal article" date="2011" name="PLoS ONE">
        <title>Structural basis for specific binding of human MPP8 chromodomain to histone H3 methylated at lysine 9.</title>
        <authorList>
            <person name="Li J."/>
            <person name="Li Z."/>
            <person name="Ruan J."/>
            <person name="Xu C."/>
            <person name="Tong Y."/>
            <person name="Pan P.W."/>
            <person name="Tempel W."/>
            <person name="Crombet L."/>
            <person name="Min J."/>
            <person name="Zang J."/>
        </authorList>
    </citation>
    <scope>X-RAY CRYSTALLOGRAPHY (2.05 ANGSTROMS) OF 55-116 IN COMPLEX WITH HISTONE H3K9ME3 PEPTIDE</scope>
    <scope>DOMAIN CHROMO</scope>
    <scope>SUBUNIT</scope>
</reference>